<name>YS88_CAEEL</name>
<accession>Q09384</accession>
<keyword id="KW-1185">Reference proteome</keyword>
<gene>
    <name type="ORF">ZK945.8</name>
</gene>
<dbReference type="EMBL" id="Z48544">
    <property type="protein sequence ID" value="CAA88441.1"/>
    <property type="molecule type" value="Genomic_DNA"/>
</dbReference>
<dbReference type="PIR" id="T28124">
    <property type="entry name" value="T28124"/>
</dbReference>
<dbReference type="RefSeq" id="NP_496183.1">
    <property type="nucleotide sequence ID" value="NM_063782.3"/>
</dbReference>
<dbReference type="BioGRID" id="56007">
    <property type="interactions" value="2"/>
</dbReference>
<dbReference type="DIP" id="DIP-24867N"/>
<dbReference type="FunCoup" id="Q09384">
    <property type="interactions" value="248"/>
</dbReference>
<dbReference type="STRING" id="6239.ZK945.8.1"/>
<dbReference type="PaxDb" id="6239-ZK945.8"/>
<dbReference type="EnsemblMetazoa" id="ZK945.8.1">
    <property type="protein sequence ID" value="ZK945.8.1"/>
    <property type="gene ID" value="WBGene00014170"/>
</dbReference>
<dbReference type="GeneID" id="191472"/>
<dbReference type="KEGG" id="cel:CELE_ZK945.8"/>
<dbReference type="UCSC" id="ZK945.8">
    <property type="organism name" value="c. elegans"/>
</dbReference>
<dbReference type="AGR" id="WB:WBGene00014170"/>
<dbReference type="CTD" id="191472"/>
<dbReference type="WormBase" id="ZK945.8">
    <property type="protein sequence ID" value="CE01739"/>
    <property type="gene ID" value="WBGene00014170"/>
</dbReference>
<dbReference type="eggNOG" id="KOG4102">
    <property type="taxonomic scope" value="Eukaryota"/>
</dbReference>
<dbReference type="GeneTree" id="ENSGT00970000196391"/>
<dbReference type="HOGENOM" id="CLU_098333_6_0_1"/>
<dbReference type="InParanoid" id="Q09384"/>
<dbReference type="OMA" id="YEVENCR"/>
<dbReference type="OrthoDB" id="307488at2759"/>
<dbReference type="PhylomeDB" id="Q09384"/>
<dbReference type="PRO" id="PR:Q09384"/>
<dbReference type="Proteomes" id="UP000001940">
    <property type="component" value="Chromosome II"/>
</dbReference>
<dbReference type="Bgee" id="WBGene00014170">
    <property type="expression patterns" value="Expressed in pharyngeal muscle cell (C elegans) and 2 other cell types or tissues"/>
</dbReference>
<dbReference type="GO" id="GO:0005634">
    <property type="term" value="C:nucleus"/>
    <property type="evidence" value="ECO:0000318"/>
    <property type="project" value="GO_Central"/>
</dbReference>
<dbReference type="GO" id="GO:0008157">
    <property type="term" value="F:protein phosphatase 1 binding"/>
    <property type="evidence" value="ECO:0000318"/>
    <property type="project" value="GO_Central"/>
</dbReference>
<dbReference type="GO" id="GO:0004865">
    <property type="term" value="F:protein serine/threonine phosphatase inhibitor activity"/>
    <property type="evidence" value="ECO:0000318"/>
    <property type="project" value="GO_Central"/>
</dbReference>
<dbReference type="InterPro" id="IPR011107">
    <property type="entry name" value="PPI_Ypi1"/>
</dbReference>
<dbReference type="PANTHER" id="PTHR20835">
    <property type="entry name" value="E3 UBIQUITIN-PROTEIN LIGASE PPP1R11-RELATED"/>
    <property type="match status" value="1"/>
</dbReference>
<dbReference type="PANTHER" id="PTHR20835:SF9">
    <property type="entry name" value="PROTEIN CBG13382"/>
    <property type="match status" value="1"/>
</dbReference>
<dbReference type="Pfam" id="PF07491">
    <property type="entry name" value="PPI_Ypi1"/>
    <property type="match status" value="1"/>
</dbReference>
<organism>
    <name type="scientific">Caenorhabditis elegans</name>
    <dbReference type="NCBI Taxonomy" id="6239"/>
    <lineage>
        <taxon>Eukaryota</taxon>
        <taxon>Metazoa</taxon>
        <taxon>Ecdysozoa</taxon>
        <taxon>Nematoda</taxon>
        <taxon>Chromadorea</taxon>
        <taxon>Rhabditida</taxon>
        <taxon>Rhabditina</taxon>
        <taxon>Rhabditomorpha</taxon>
        <taxon>Rhabditoidea</taxon>
        <taxon>Rhabditidae</taxon>
        <taxon>Peloderinae</taxon>
        <taxon>Caenorhabditis</taxon>
    </lineage>
</organism>
<sequence length="109" mass="12308">MQAPVVTETCQTNEEGEQLVLRLRAPVERPRVTWGAGVIDNEHMGRLKSNCCCIYTPPRVWDDPSTWEPEEHETEHCRGHTLPEKKQKPQGGHGSDKDEDKGNCGCDHC</sequence>
<protein>
    <recommendedName>
        <fullName>Uncharacterized protein ZK945.8</fullName>
    </recommendedName>
</protein>
<feature type="chain" id="PRO_0000065554" description="Uncharacterized protein ZK945.8">
    <location>
        <begin position="1"/>
        <end position="109"/>
    </location>
</feature>
<feature type="region of interest" description="Disordered" evidence="1">
    <location>
        <begin position="63"/>
        <end position="109"/>
    </location>
</feature>
<feature type="compositionally biased region" description="Basic and acidic residues" evidence="1">
    <location>
        <begin position="73"/>
        <end position="87"/>
    </location>
</feature>
<feature type="compositionally biased region" description="Basic and acidic residues" evidence="1">
    <location>
        <begin position="94"/>
        <end position="109"/>
    </location>
</feature>
<reference key="1">
    <citation type="journal article" date="1998" name="Science">
        <title>Genome sequence of the nematode C. elegans: a platform for investigating biology.</title>
        <authorList>
            <consortium name="The C. elegans sequencing consortium"/>
        </authorList>
    </citation>
    <scope>NUCLEOTIDE SEQUENCE [LARGE SCALE GENOMIC DNA]</scope>
    <source>
        <strain>Bristol N2</strain>
    </source>
</reference>
<evidence type="ECO:0000256" key="1">
    <source>
        <dbReference type="SAM" id="MobiDB-lite"/>
    </source>
</evidence>
<proteinExistence type="predicted"/>